<proteinExistence type="inferred from homology"/>
<name>KDSA_PSEF5</name>
<evidence type="ECO:0000255" key="1">
    <source>
        <dbReference type="HAMAP-Rule" id="MF_00056"/>
    </source>
</evidence>
<comment type="catalytic activity">
    <reaction evidence="1">
        <text>D-arabinose 5-phosphate + phosphoenolpyruvate + H2O = 3-deoxy-alpha-D-manno-2-octulosonate-8-phosphate + phosphate</text>
        <dbReference type="Rhea" id="RHEA:14053"/>
        <dbReference type="ChEBI" id="CHEBI:15377"/>
        <dbReference type="ChEBI" id="CHEBI:43474"/>
        <dbReference type="ChEBI" id="CHEBI:57693"/>
        <dbReference type="ChEBI" id="CHEBI:58702"/>
        <dbReference type="ChEBI" id="CHEBI:85985"/>
        <dbReference type="EC" id="2.5.1.55"/>
    </reaction>
</comment>
<comment type="pathway">
    <text evidence="1">Carbohydrate biosynthesis; 3-deoxy-D-manno-octulosonate biosynthesis; 3-deoxy-D-manno-octulosonate from D-ribulose 5-phosphate: step 2/3.</text>
</comment>
<comment type="pathway">
    <text evidence="1">Bacterial outer membrane biogenesis; lipopolysaccharide biosynthesis.</text>
</comment>
<comment type="subcellular location">
    <subcellularLocation>
        <location evidence="1">Cytoplasm</location>
    </subcellularLocation>
</comment>
<comment type="similarity">
    <text evidence="1">Belongs to the KdsA family.</text>
</comment>
<protein>
    <recommendedName>
        <fullName evidence="1">2-dehydro-3-deoxyphosphooctonate aldolase</fullName>
        <ecNumber evidence="1">2.5.1.55</ecNumber>
    </recommendedName>
    <alternativeName>
        <fullName evidence="1">3-deoxy-D-manno-octulosonic acid 8-phosphate synthase</fullName>
    </alternativeName>
    <alternativeName>
        <fullName evidence="1">KDO-8-phosphate synthase</fullName>
        <shortName evidence="1">KDO 8-P synthase</shortName>
        <shortName evidence="1">KDOPS</shortName>
    </alternativeName>
    <alternativeName>
        <fullName evidence="1">Phospho-2-dehydro-3-deoxyoctonate aldolase</fullName>
    </alternativeName>
</protein>
<accession>Q4KHF7</accession>
<dbReference type="EC" id="2.5.1.55" evidence="1"/>
<dbReference type="EMBL" id="CP000076">
    <property type="protein sequence ID" value="AAY90482.1"/>
    <property type="molecule type" value="Genomic_DNA"/>
</dbReference>
<dbReference type="RefSeq" id="WP_011059542.1">
    <property type="nucleotide sequence ID" value="NC_004129.6"/>
</dbReference>
<dbReference type="SMR" id="Q4KHF7"/>
<dbReference type="STRING" id="220664.PFL_1195"/>
<dbReference type="GeneID" id="57474199"/>
<dbReference type="KEGG" id="pfl:PFL_1195"/>
<dbReference type="PATRIC" id="fig|220664.5.peg.1227"/>
<dbReference type="eggNOG" id="COG2877">
    <property type="taxonomic scope" value="Bacteria"/>
</dbReference>
<dbReference type="HOGENOM" id="CLU_036666_0_0_6"/>
<dbReference type="UniPathway" id="UPA00030"/>
<dbReference type="UniPathway" id="UPA00357">
    <property type="reaction ID" value="UER00474"/>
</dbReference>
<dbReference type="Proteomes" id="UP000008540">
    <property type="component" value="Chromosome"/>
</dbReference>
<dbReference type="GO" id="GO:0005737">
    <property type="term" value="C:cytoplasm"/>
    <property type="evidence" value="ECO:0007669"/>
    <property type="project" value="UniProtKB-SubCell"/>
</dbReference>
<dbReference type="GO" id="GO:0008676">
    <property type="term" value="F:3-deoxy-8-phosphooctulonate synthase activity"/>
    <property type="evidence" value="ECO:0007669"/>
    <property type="project" value="UniProtKB-UniRule"/>
</dbReference>
<dbReference type="GO" id="GO:0019294">
    <property type="term" value="P:keto-3-deoxy-D-manno-octulosonic acid biosynthetic process"/>
    <property type="evidence" value="ECO:0007669"/>
    <property type="project" value="UniProtKB-UniRule"/>
</dbReference>
<dbReference type="FunFam" id="3.20.20.70:FF:000058">
    <property type="entry name" value="2-dehydro-3-deoxyphosphooctonate aldolase"/>
    <property type="match status" value="1"/>
</dbReference>
<dbReference type="Gene3D" id="3.20.20.70">
    <property type="entry name" value="Aldolase class I"/>
    <property type="match status" value="1"/>
</dbReference>
<dbReference type="HAMAP" id="MF_00056">
    <property type="entry name" value="KDO8P_synth"/>
    <property type="match status" value="1"/>
</dbReference>
<dbReference type="InterPro" id="IPR013785">
    <property type="entry name" value="Aldolase_TIM"/>
</dbReference>
<dbReference type="InterPro" id="IPR006218">
    <property type="entry name" value="DAHP1/KDSA"/>
</dbReference>
<dbReference type="InterPro" id="IPR006269">
    <property type="entry name" value="KDO8P_synthase"/>
</dbReference>
<dbReference type="NCBIfam" id="TIGR01362">
    <property type="entry name" value="KDO8P_synth"/>
    <property type="match status" value="1"/>
</dbReference>
<dbReference type="NCBIfam" id="NF003543">
    <property type="entry name" value="PRK05198.1"/>
    <property type="match status" value="1"/>
</dbReference>
<dbReference type="NCBIfam" id="NF009109">
    <property type="entry name" value="PRK12457.1"/>
    <property type="match status" value="1"/>
</dbReference>
<dbReference type="PANTHER" id="PTHR21057">
    <property type="entry name" value="PHOSPHO-2-DEHYDRO-3-DEOXYHEPTONATE ALDOLASE"/>
    <property type="match status" value="1"/>
</dbReference>
<dbReference type="Pfam" id="PF00793">
    <property type="entry name" value="DAHP_synth_1"/>
    <property type="match status" value="1"/>
</dbReference>
<dbReference type="SUPFAM" id="SSF51569">
    <property type="entry name" value="Aldolase"/>
    <property type="match status" value="1"/>
</dbReference>
<gene>
    <name evidence="1" type="primary">kdsA</name>
    <name type="ordered locus">PFL_1195</name>
</gene>
<feature type="chain" id="PRO_0000304472" description="2-dehydro-3-deoxyphosphooctonate aldolase">
    <location>
        <begin position="1"/>
        <end position="281"/>
    </location>
</feature>
<organism>
    <name type="scientific">Pseudomonas fluorescens (strain ATCC BAA-477 / NRRL B-23932 / Pf-5)</name>
    <dbReference type="NCBI Taxonomy" id="220664"/>
    <lineage>
        <taxon>Bacteria</taxon>
        <taxon>Pseudomonadati</taxon>
        <taxon>Pseudomonadota</taxon>
        <taxon>Gammaproteobacteria</taxon>
        <taxon>Pseudomonadales</taxon>
        <taxon>Pseudomonadaceae</taxon>
        <taxon>Pseudomonas</taxon>
    </lineage>
</organism>
<keyword id="KW-0963">Cytoplasm</keyword>
<keyword id="KW-0448">Lipopolysaccharide biosynthesis</keyword>
<keyword id="KW-0808">Transferase</keyword>
<reference key="1">
    <citation type="journal article" date="2005" name="Nat. Biotechnol.">
        <title>Complete genome sequence of the plant commensal Pseudomonas fluorescens Pf-5.</title>
        <authorList>
            <person name="Paulsen I.T."/>
            <person name="Press C.M."/>
            <person name="Ravel J."/>
            <person name="Kobayashi D.Y."/>
            <person name="Myers G.S.A."/>
            <person name="Mavrodi D.V."/>
            <person name="DeBoy R.T."/>
            <person name="Seshadri R."/>
            <person name="Ren Q."/>
            <person name="Madupu R."/>
            <person name="Dodson R.J."/>
            <person name="Durkin A.S."/>
            <person name="Brinkac L.M."/>
            <person name="Daugherty S.C."/>
            <person name="Sullivan S.A."/>
            <person name="Rosovitz M.J."/>
            <person name="Gwinn M.L."/>
            <person name="Zhou L."/>
            <person name="Schneider D.J."/>
            <person name="Cartinhour S.W."/>
            <person name="Nelson W.C."/>
            <person name="Weidman J."/>
            <person name="Watkins K."/>
            <person name="Tran K."/>
            <person name="Khouri H."/>
            <person name="Pierson E.A."/>
            <person name="Pierson L.S. III"/>
            <person name="Thomashow L.S."/>
            <person name="Loper J.E."/>
        </authorList>
    </citation>
    <scope>NUCLEOTIDE SEQUENCE [LARGE SCALE GENOMIC DNA]</scope>
    <source>
        <strain>ATCC BAA-477 / NRRL B-23932 / Pf-5</strain>
    </source>
</reference>
<sequence>MAQKIIRVGNIEIANDKPMVLFGGMNVLESRDMAMQVCEEYVRVTEKLGIPYVFKASFDKANRSSVTSYRGPGLEEGMRIFEDVKQAFGVPIITDVHEPAQAAVVAEVCDIIQLPAFLSRQTDLVVAMAKTGAVINIKKAQFLAPQEMKHILSKCEEAGNDQLILCERGSSFGYNNLVVDMLGFGIMKQFEYPVFFDVTHALQMPGGRADSAGGRRAQVTDLAKAGMSQSLAGLFLEAHPDPDNAKCDGPCALRLDKLEPFLAQLKALDELVKSFPTVETA</sequence>